<organism>
    <name type="scientific">Candida albicans (strain SC5314 / ATCC MYA-2876)</name>
    <name type="common">Yeast</name>
    <dbReference type="NCBI Taxonomy" id="237561"/>
    <lineage>
        <taxon>Eukaryota</taxon>
        <taxon>Fungi</taxon>
        <taxon>Dikarya</taxon>
        <taxon>Ascomycota</taxon>
        <taxon>Saccharomycotina</taxon>
        <taxon>Pichiomycetes</taxon>
        <taxon>Debaryomycetaceae</taxon>
        <taxon>Candida/Lodderomyces clade</taxon>
        <taxon>Candida</taxon>
    </lineage>
</organism>
<accession>O42825</accession>
<accession>A0A1D8PSB7</accession>
<accession>Q5A200</accession>
<name>RHO1_CANAL</name>
<dbReference type="EMBL" id="D86430">
    <property type="protein sequence ID" value="BAA24262.1"/>
    <property type="molecule type" value="Genomic_DNA"/>
</dbReference>
<dbReference type="EMBL" id="CP017630">
    <property type="protein sequence ID" value="AOW31026.1"/>
    <property type="molecule type" value="Genomic_DNA"/>
</dbReference>
<dbReference type="RefSeq" id="XP_715774.1">
    <property type="nucleotide sequence ID" value="XM_710681.1"/>
</dbReference>
<dbReference type="SMR" id="O42825"/>
<dbReference type="BioGRID" id="1225651">
    <property type="interactions" value="3"/>
</dbReference>
<dbReference type="FunCoup" id="O42825">
    <property type="interactions" value="772"/>
</dbReference>
<dbReference type="STRING" id="237561.O42825"/>
<dbReference type="EnsemblFungi" id="CR_02860W_A-T">
    <property type="protein sequence ID" value="CR_02860W_A-T-p1"/>
    <property type="gene ID" value="CR_02860W_A"/>
</dbReference>
<dbReference type="GeneID" id="3642564"/>
<dbReference type="KEGG" id="cal:CAALFM_CR02860WA"/>
<dbReference type="CGD" id="CAL0000192659">
    <property type="gene designation" value="RHO1"/>
</dbReference>
<dbReference type="VEuPathDB" id="FungiDB:CR_02860W_A"/>
<dbReference type="eggNOG" id="KOG0393">
    <property type="taxonomic scope" value="Eukaryota"/>
</dbReference>
<dbReference type="HOGENOM" id="CLU_041217_21_2_1"/>
<dbReference type="InParanoid" id="O42825"/>
<dbReference type="OMA" id="EVNHYIP"/>
<dbReference type="OrthoDB" id="8830751at2759"/>
<dbReference type="PHI-base" id="PHI:270"/>
<dbReference type="PRO" id="PR:O42825"/>
<dbReference type="Proteomes" id="UP000000559">
    <property type="component" value="Chromosome R"/>
</dbReference>
<dbReference type="GO" id="GO:0005829">
    <property type="term" value="C:cytosol"/>
    <property type="evidence" value="ECO:0000318"/>
    <property type="project" value="GO_Central"/>
</dbReference>
<dbReference type="GO" id="GO:1903561">
    <property type="term" value="C:extracellular vesicle"/>
    <property type="evidence" value="ECO:0000314"/>
    <property type="project" value="CGD"/>
</dbReference>
<dbReference type="GO" id="GO:0001411">
    <property type="term" value="C:hyphal tip"/>
    <property type="evidence" value="ECO:0000314"/>
    <property type="project" value="CGD"/>
</dbReference>
<dbReference type="GO" id="GO:0005886">
    <property type="term" value="C:plasma membrane"/>
    <property type="evidence" value="ECO:0000314"/>
    <property type="project" value="CGD"/>
</dbReference>
<dbReference type="GO" id="GO:0005525">
    <property type="term" value="F:GTP binding"/>
    <property type="evidence" value="ECO:0000314"/>
    <property type="project" value="CGD"/>
</dbReference>
<dbReference type="GO" id="GO:0003924">
    <property type="term" value="F:GTPase activity"/>
    <property type="evidence" value="ECO:0000250"/>
    <property type="project" value="CGD"/>
</dbReference>
<dbReference type="GO" id="GO:0019901">
    <property type="term" value="F:protein kinase binding"/>
    <property type="evidence" value="ECO:0000318"/>
    <property type="project" value="GO_Central"/>
</dbReference>
<dbReference type="GO" id="GO:0006075">
    <property type="term" value="P:(1-&gt;3)-beta-D-glucan biosynthetic process"/>
    <property type="evidence" value="ECO:0000315"/>
    <property type="project" value="CGD"/>
</dbReference>
<dbReference type="GO" id="GO:0007015">
    <property type="term" value="P:actin filament organization"/>
    <property type="evidence" value="ECO:0000318"/>
    <property type="project" value="GO_Central"/>
</dbReference>
<dbReference type="GO" id="GO:1900240">
    <property type="term" value="P:negative regulation of phenotypic switching"/>
    <property type="evidence" value="ECO:0000315"/>
    <property type="project" value="CGD"/>
</dbReference>
<dbReference type="GO" id="GO:0032956">
    <property type="term" value="P:regulation of actin cytoskeleton organization"/>
    <property type="evidence" value="ECO:0000318"/>
    <property type="project" value="GO_Central"/>
</dbReference>
<dbReference type="GO" id="GO:0007266">
    <property type="term" value="P:Rho protein signal transduction"/>
    <property type="evidence" value="ECO:0000314"/>
    <property type="project" value="CGD"/>
</dbReference>
<dbReference type="GO" id="GO:0007165">
    <property type="term" value="P:signal transduction"/>
    <property type="evidence" value="ECO:0000318"/>
    <property type="project" value="GO_Central"/>
</dbReference>
<dbReference type="GO" id="GO:0007264">
    <property type="term" value="P:small GTPase-mediated signal transduction"/>
    <property type="evidence" value="ECO:0000250"/>
    <property type="project" value="CGD"/>
</dbReference>
<dbReference type="CDD" id="cd01870">
    <property type="entry name" value="RhoA_like"/>
    <property type="match status" value="1"/>
</dbReference>
<dbReference type="FunFam" id="3.40.50.300:FF:000329">
    <property type="entry name" value="GTP-binding protein rhoA"/>
    <property type="match status" value="1"/>
</dbReference>
<dbReference type="Gene3D" id="3.40.50.300">
    <property type="entry name" value="P-loop containing nucleotide triphosphate hydrolases"/>
    <property type="match status" value="1"/>
</dbReference>
<dbReference type="InterPro" id="IPR027417">
    <property type="entry name" value="P-loop_NTPase"/>
</dbReference>
<dbReference type="InterPro" id="IPR005225">
    <property type="entry name" value="Small_GTP-bd"/>
</dbReference>
<dbReference type="InterPro" id="IPR001806">
    <property type="entry name" value="Small_GTPase"/>
</dbReference>
<dbReference type="InterPro" id="IPR003578">
    <property type="entry name" value="Small_GTPase_Rho"/>
</dbReference>
<dbReference type="NCBIfam" id="TIGR00231">
    <property type="entry name" value="small_GTP"/>
    <property type="match status" value="1"/>
</dbReference>
<dbReference type="PANTHER" id="PTHR24072">
    <property type="entry name" value="RHO FAMILY GTPASE"/>
    <property type="match status" value="1"/>
</dbReference>
<dbReference type="Pfam" id="PF00071">
    <property type="entry name" value="Ras"/>
    <property type="match status" value="1"/>
</dbReference>
<dbReference type="PRINTS" id="PR00449">
    <property type="entry name" value="RASTRNSFRMNG"/>
</dbReference>
<dbReference type="SMART" id="SM00175">
    <property type="entry name" value="RAB"/>
    <property type="match status" value="1"/>
</dbReference>
<dbReference type="SMART" id="SM00176">
    <property type="entry name" value="RAN"/>
    <property type="match status" value="1"/>
</dbReference>
<dbReference type="SMART" id="SM00173">
    <property type="entry name" value="RAS"/>
    <property type="match status" value="1"/>
</dbReference>
<dbReference type="SMART" id="SM00174">
    <property type="entry name" value="RHO"/>
    <property type="match status" value="1"/>
</dbReference>
<dbReference type="SUPFAM" id="SSF52540">
    <property type="entry name" value="P-loop containing nucleoside triphosphate hydrolases"/>
    <property type="match status" value="1"/>
</dbReference>
<dbReference type="PROSITE" id="PS51420">
    <property type="entry name" value="RHO"/>
    <property type="match status" value="1"/>
</dbReference>
<sequence length="198" mass="21999">MVNGPAELRRKLVIVGDGACGKTCLLIVFSKGTFPEVYVPTVFENYVADVEVDGRKVELALWDTAGQEDYDRLRPLSYPDSNVILICFSVDSPDSLDNVLEKWISEVLHFCQGVPIILVGCKSDLRDDPHTIEALRQQQQQPVSTSEGQQVAQRIGAADYLECSAKTGRGVREVFEAATRASLRVKEKKEKKKKCVVL</sequence>
<gene>
    <name type="primary">RHO1</name>
    <name type="ordered locus">CAALFM_CR02860WA</name>
    <name type="ORF">CaO19.10362</name>
    <name type="ORF">CaO19.2843</name>
</gene>
<comment type="subcellular location">
    <subcellularLocation>
        <location evidence="2">Cell membrane</location>
        <topology evidence="2">Lipid-anchor</topology>
        <orientation evidence="2">Cytoplasmic side</orientation>
    </subcellularLocation>
</comment>
<comment type="similarity">
    <text evidence="2">Belongs to the small GTPase superfamily. Rho family.</text>
</comment>
<feature type="chain" id="PRO_0000198935" description="GTP-binding protein RHO1">
    <location>
        <begin position="1"/>
        <end position="195"/>
    </location>
</feature>
<feature type="propeptide" id="PRO_0000281265" description="Removed in mature form" evidence="1">
    <location>
        <begin position="196"/>
        <end position="198"/>
    </location>
</feature>
<feature type="short sequence motif" description="Effector region" evidence="1">
    <location>
        <begin position="38"/>
        <end position="46"/>
    </location>
</feature>
<feature type="binding site" evidence="1">
    <location>
        <begin position="16"/>
        <end position="23"/>
    </location>
    <ligand>
        <name>GTP</name>
        <dbReference type="ChEBI" id="CHEBI:37565"/>
    </ligand>
</feature>
<feature type="binding site" evidence="1">
    <location>
        <begin position="63"/>
        <end position="67"/>
    </location>
    <ligand>
        <name>GTP</name>
        <dbReference type="ChEBI" id="CHEBI:37565"/>
    </ligand>
</feature>
<feature type="binding site" evidence="1">
    <location>
        <begin position="121"/>
        <end position="124"/>
    </location>
    <ligand>
        <name>GTP</name>
        <dbReference type="ChEBI" id="CHEBI:37565"/>
    </ligand>
</feature>
<feature type="modified residue" description="Cysteine methyl ester" evidence="1">
    <location>
        <position position="195"/>
    </location>
</feature>
<feature type="lipid moiety-binding region" description="S-geranylgeranyl cysteine" evidence="1">
    <location>
        <position position="195"/>
    </location>
</feature>
<proteinExistence type="inferred from homology"/>
<protein>
    <recommendedName>
        <fullName>GTP-binding protein RHO1</fullName>
    </recommendedName>
</protein>
<reference key="1">
    <citation type="journal article" date="1997" name="J. Bacteriol.">
        <title>Cloning of the RHO1 gene from Candida albicans and its regulation of beta-1,3-glucan synthesis.</title>
        <authorList>
            <person name="Kondoh O."/>
            <person name="Tachibana Y."/>
            <person name="Ohya Y."/>
            <person name="Arisawa M."/>
            <person name="Watanabe T."/>
        </authorList>
    </citation>
    <scope>NUCLEOTIDE SEQUENCE [GENOMIC DNA]</scope>
</reference>
<reference key="2">
    <citation type="journal article" date="2004" name="Proc. Natl. Acad. Sci. U.S.A.">
        <title>The diploid genome sequence of Candida albicans.</title>
        <authorList>
            <person name="Jones T."/>
            <person name="Federspiel N.A."/>
            <person name="Chibana H."/>
            <person name="Dungan J."/>
            <person name="Kalman S."/>
            <person name="Magee B.B."/>
            <person name="Newport G."/>
            <person name="Thorstenson Y.R."/>
            <person name="Agabian N."/>
            <person name="Magee P.T."/>
            <person name="Davis R.W."/>
            <person name="Scherer S."/>
        </authorList>
    </citation>
    <scope>NUCLEOTIDE SEQUENCE [LARGE SCALE GENOMIC DNA]</scope>
    <source>
        <strain>SC5314 / ATCC MYA-2876</strain>
    </source>
</reference>
<reference key="3">
    <citation type="journal article" date="2007" name="Genome Biol.">
        <title>Assembly of the Candida albicans genome into sixteen supercontigs aligned on the eight chromosomes.</title>
        <authorList>
            <person name="van het Hoog M."/>
            <person name="Rast T.J."/>
            <person name="Martchenko M."/>
            <person name="Grindle S."/>
            <person name="Dignard D."/>
            <person name="Hogues H."/>
            <person name="Cuomo C."/>
            <person name="Berriman M."/>
            <person name="Scherer S."/>
            <person name="Magee B.B."/>
            <person name="Whiteway M."/>
            <person name="Chibana H."/>
            <person name="Nantel A."/>
            <person name="Magee P.T."/>
        </authorList>
    </citation>
    <scope>GENOME REANNOTATION</scope>
    <source>
        <strain>SC5314 / ATCC MYA-2876</strain>
    </source>
</reference>
<reference key="4">
    <citation type="journal article" date="2013" name="Genome Biol.">
        <title>Assembly of a phased diploid Candida albicans genome facilitates allele-specific measurements and provides a simple model for repeat and indel structure.</title>
        <authorList>
            <person name="Muzzey D."/>
            <person name="Schwartz K."/>
            <person name="Weissman J.S."/>
            <person name="Sherlock G."/>
        </authorList>
    </citation>
    <scope>NUCLEOTIDE SEQUENCE [LARGE SCALE GENOMIC DNA]</scope>
    <scope>GENOME REANNOTATION</scope>
    <source>
        <strain>SC5314 / ATCC MYA-2876</strain>
    </source>
</reference>
<evidence type="ECO:0000250" key="1"/>
<evidence type="ECO:0000305" key="2"/>
<keyword id="KW-1003">Cell membrane</keyword>
<keyword id="KW-0342">GTP-binding</keyword>
<keyword id="KW-0449">Lipoprotein</keyword>
<keyword id="KW-0472">Membrane</keyword>
<keyword id="KW-0488">Methylation</keyword>
<keyword id="KW-0547">Nucleotide-binding</keyword>
<keyword id="KW-0636">Prenylation</keyword>
<keyword id="KW-1185">Reference proteome</keyword>